<sequence length="246" mass="27453">MEPVINFSNVTKEYPLYHHIGSGIKDLVFHPKRAFQLLKGRKYLAIEDISFTVAKGEAVALIGRNGAGKSTSLGLVAGVIKPTKGSVTTHGRVASMLELGGGFHPELTGRENIYLNATLLGLRRKEVQQRMERIIEFSELGEFIDEPIRVYSSGMLAKLGFSVISQVEPDILIIDEVLAVGDISFQAKCIKTIREFKKKGVTILFVSHNMSDVERICDRVVWIENHRLREIGSAERIIELYKQAMA</sequence>
<keyword id="KW-0067">ATP-binding</keyword>
<keyword id="KW-0997">Cell inner membrane</keyword>
<keyword id="KW-1003">Cell membrane</keyword>
<keyword id="KW-0472">Membrane</keyword>
<keyword id="KW-0547">Nucleotide-binding</keyword>
<keyword id="KW-0625">Polysaccharide transport</keyword>
<keyword id="KW-0762">Sugar transport</keyword>
<keyword id="KW-0813">Transport</keyword>
<protein>
    <recommendedName>
        <fullName>O-antigen export system ATP-binding protein RfbB</fullName>
    </recommendedName>
</protein>
<feature type="chain" id="PRO_0000092959" description="O-antigen export system ATP-binding protein RfbB">
    <location>
        <begin position="1"/>
        <end position="246"/>
    </location>
</feature>
<feature type="domain" description="ABC transporter" evidence="1">
    <location>
        <begin position="22"/>
        <end position="246"/>
    </location>
</feature>
<feature type="binding site" evidence="1">
    <location>
        <begin position="63"/>
        <end position="70"/>
    </location>
    <ligand>
        <name>ATP</name>
        <dbReference type="ChEBI" id="CHEBI:30616"/>
    </ligand>
</feature>
<dbReference type="EMBL" id="L41518">
    <property type="protein sequence ID" value="AAC98406.1"/>
    <property type="molecule type" value="Genomic_DNA"/>
</dbReference>
<dbReference type="SMR" id="Q48479"/>
<dbReference type="GO" id="GO:0005886">
    <property type="term" value="C:plasma membrane"/>
    <property type="evidence" value="ECO:0007669"/>
    <property type="project" value="UniProtKB-SubCell"/>
</dbReference>
<dbReference type="GO" id="GO:0140359">
    <property type="term" value="F:ABC-type transporter activity"/>
    <property type="evidence" value="ECO:0007669"/>
    <property type="project" value="InterPro"/>
</dbReference>
<dbReference type="GO" id="GO:0005524">
    <property type="term" value="F:ATP binding"/>
    <property type="evidence" value="ECO:0007669"/>
    <property type="project" value="UniProtKB-KW"/>
</dbReference>
<dbReference type="GO" id="GO:0016887">
    <property type="term" value="F:ATP hydrolysis activity"/>
    <property type="evidence" value="ECO:0007669"/>
    <property type="project" value="InterPro"/>
</dbReference>
<dbReference type="GO" id="GO:0015774">
    <property type="term" value="P:polysaccharide transport"/>
    <property type="evidence" value="ECO:0007669"/>
    <property type="project" value="UniProtKB-KW"/>
</dbReference>
<dbReference type="CDD" id="cd03220">
    <property type="entry name" value="ABC_KpsT_Wzt"/>
    <property type="match status" value="1"/>
</dbReference>
<dbReference type="Gene3D" id="3.40.50.300">
    <property type="entry name" value="P-loop containing nucleotide triphosphate hydrolases"/>
    <property type="match status" value="1"/>
</dbReference>
<dbReference type="InterPro" id="IPR003593">
    <property type="entry name" value="AAA+_ATPase"/>
</dbReference>
<dbReference type="InterPro" id="IPR003439">
    <property type="entry name" value="ABC_transporter-like_ATP-bd"/>
</dbReference>
<dbReference type="InterPro" id="IPR017871">
    <property type="entry name" value="ABC_transporter-like_CS"/>
</dbReference>
<dbReference type="InterPro" id="IPR015860">
    <property type="entry name" value="ABC_transpr_TagH-like"/>
</dbReference>
<dbReference type="InterPro" id="IPR050683">
    <property type="entry name" value="Bact_Polysacc_Export_ATP-bd"/>
</dbReference>
<dbReference type="InterPro" id="IPR027417">
    <property type="entry name" value="P-loop_NTPase"/>
</dbReference>
<dbReference type="PANTHER" id="PTHR46743">
    <property type="entry name" value="TEICHOIC ACIDS EXPORT ATP-BINDING PROTEIN TAGH"/>
    <property type="match status" value="1"/>
</dbReference>
<dbReference type="PANTHER" id="PTHR46743:SF2">
    <property type="entry name" value="TEICHOIC ACIDS EXPORT ATP-BINDING PROTEIN TAGH"/>
    <property type="match status" value="1"/>
</dbReference>
<dbReference type="Pfam" id="PF00005">
    <property type="entry name" value="ABC_tran"/>
    <property type="match status" value="1"/>
</dbReference>
<dbReference type="SMART" id="SM00382">
    <property type="entry name" value="AAA"/>
    <property type="match status" value="1"/>
</dbReference>
<dbReference type="SUPFAM" id="SSF52540">
    <property type="entry name" value="P-loop containing nucleoside triphosphate hydrolases"/>
    <property type="match status" value="1"/>
</dbReference>
<dbReference type="PROSITE" id="PS00211">
    <property type="entry name" value="ABC_TRANSPORTER_1"/>
    <property type="match status" value="1"/>
</dbReference>
<dbReference type="PROSITE" id="PS50893">
    <property type="entry name" value="ABC_TRANSPORTER_2"/>
    <property type="match status" value="1"/>
</dbReference>
<gene>
    <name type="primary">rfbB</name>
</gene>
<reference key="1">
    <citation type="journal article" date="1996" name="J. Bacteriol.">
        <title>Clonally diverse rfb gene clusters are involved in expression of a family of related D-galactan O antigens in Klebsiella species.</title>
        <authorList>
            <person name="Kelly R.F."/>
            <person name="Whitfield C."/>
        </authorList>
    </citation>
    <scope>NUCLEOTIDE SEQUENCE [GENOMIC DNA]</scope>
    <source>
        <strain>Serotype O8</strain>
    </source>
</reference>
<accession>Q48479</accession>
<proteinExistence type="inferred from homology"/>
<comment type="function">
    <text>May form an ATP-driven O-antigen export apparatus, in association with RfbA.</text>
</comment>
<comment type="subcellular location">
    <subcellularLocation>
        <location evidence="2">Cell inner membrane</location>
        <topology evidence="2">Peripheral membrane protein</topology>
    </subcellularLocation>
</comment>
<comment type="similarity">
    <text evidence="2">Belongs to the ABC transporter superfamily.</text>
</comment>
<evidence type="ECO:0000255" key="1">
    <source>
        <dbReference type="PROSITE-ProRule" id="PRU00434"/>
    </source>
</evidence>
<evidence type="ECO:0000305" key="2"/>
<organism>
    <name type="scientific">Klebsiella pneumoniae</name>
    <dbReference type="NCBI Taxonomy" id="573"/>
    <lineage>
        <taxon>Bacteria</taxon>
        <taxon>Pseudomonadati</taxon>
        <taxon>Pseudomonadota</taxon>
        <taxon>Gammaproteobacteria</taxon>
        <taxon>Enterobacterales</taxon>
        <taxon>Enterobacteriaceae</taxon>
        <taxon>Klebsiella/Raoultella group</taxon>
        <taxon>Klebsiella</taxon>
        <taxon>Klebsiella pneumoniae complex</taxon>
    </lineage>
</organism>
<name>RFBB2_KLEPN</name>